<organism>
    <name type="scientific">Picosynechococcus sp. (strain ATCC 27264 / PCC 7002 / PR-6)</name>
    <name type="common">Agmenellum quadruplicatum</name>
    <dbReference type="NCBI Taxonomy" id="32049"/>
    <lineage>
        <taxon>Bacteria</taxon>
        <taxon>Bacillati</taxon>
        <taxon>Cyanobacteriota</taxon>
        <taxon>Cyanophyceae</taxon>
        <taxon>Oscillatoriophycideae</taxon>
        <taxon>Chroococcales</taxon>
        <taxon>Geminocystaceae</taxon>
        <taxon>Picosynechococcus</taxon>
    </lineage>
</organism>
<proteinExistence type="inferred from homology"/>
<sequence>MAVAAPRKTEYEAIIGLETHCQLNTASKIFCHCSTKFDSDPNSNVCPVCLGYPGVLPVLNEKVLESAVKMGLALKAKISPYSKFDRKQYFYPDLPKNYQISQFDLPIVEHGHLEIEIADKPSDPPVKKTIGVTRLHMEEDAGKLVHAGSDRLAGSTYSKVDFNRTGIPLLEIVSEPDIRSGKEAAEYAQELRRLVRYLGIGDGNMQEGSLRCDVNISIRPVGQEEFGTKVEIKNMNSFSAIQKAIDYEIERQIKAVETGEPIYQETRLWDESSQRTFSMRKKEGSSDYRYFPEPDLPPIEVTPAQLEKWAAELPETPAQKRERYETEYGLSSYDTRVLTDDRDVAEYFEAAVAAGADPKQVTNWVTQDIAAHLNKNVGLTIVELPLKATQLAELVNLIHDGTISGKIAKEILPELLEQGGSPKAIVESRGLTQISDTGALEAMVDEVLAANPEKVEQFRAGKTKLQGFFVGQLMKKTSGRADPKLLNQILAQKLRG</sequence>
<gene>
    <name evidence="1" type="primary">gatB</name>
    <name type="ordered locus">SYNPCC7002_A2536</name>
</gene>
<name>GATB_PICP2</name>
<dbReference type="EC" id="6.3.5.-" evidence="1"/>
<dbReference type="EMBL" id="CP000951">
    <property type="protein sequence ID" value="ACB00513.1"/>
    <property type="molecule type" value="Genomic_DNA"/>
</dbReference>
<dbReference type="RefSeq" id="WP_012308131.1">
    <property type="nucleotide sequence ID" value="NZ_JAHHPU010000003.1"/>
</dbReference>
<dbReference type="SMR" id="B1XKN8"/>
<dbReference type="STRING" id="32049.SYNPCC7002_A2536"/>
<dbReference type="KEGG" id="syp:SYNPCC7002_A2536"/>
<dbReference type="eggNOG" id="COG0064">
    <property type="taxonomic scope" value="Bacteria"/>
</dbReference>
<dbReference type="HOGENOM" id="CLU_019240_0_0_3"/>
<dbReference type="Proteomes" id="UP000001688">
    <property type="component" value="Chromosome"/>
</dbReference>
<dbReference type="GO" id="GO:0050566">
    <property type="term" value="F:asparaginyl-tRNA synthase (glutamine-hydrolyzing) activity"/>
    <property type="evidence" value="ECO:0007669"/>
    <property type="project" value="RHEA"/>
</dbReference>
<dbReference type="GO" id="GO:0005524">
    <property type="term" value="F:ATP binding"/>
    <property type="evidence" value="ECO:0007669"/>
    <property type="project" value="UniProtKB-KW"/>
</dbReference>
<dbReference type="GO" id="GO:0050567">
    <property type="term" value="F:glutaminyl-tRNA synthase (glutamine-hydrolyzing) activity"/>
    <property type="evidence" value="ECO:0007669"/>
    <property type="project" value="UniProtKB-UniRule"/>
</dbReference>
<dbReference type="GO" id="GO:0070681">
    <property type="term" value="P:glutaminyl-tRNAGln biosynthesis via transamidation"/>
    <property type="evidence" value="ECO:0007669"/>
    <property type="project" value="TreeGrafter"/>
</dbReference>
<dbReference type="GO" id="GO:0006412">
    <property type="term" value="P:translation"/>
    <property type="evidence" value="ECO:0007669"/>
    <property type="project" value="UniProtKB-UniRule"/>
</dbReference>
<dbReference type="FunFam" id="1.10.10.410:FF:000001">
    <property type="entry name" value="Aspartyl/glutamyl-tRNA(Asn/Gln) amidotransferase subunit B"/>
    <property type="match status" value="1"/>
</dbReference>
<dbReference type="FunFam" id="1.10.150.380:FF:000001">
    <property type="entry name" value="Aspartyl/glutamyl-tRNA(Asn/Gln) amidotransferase subunit B"/>
    <property type="match status" value="1"/>
</dbReference>
<dbReference type="Gene3D" id="1.10.10.410">
    <property type="match status" value="1"/>
</dbReference>
<dbReference type="Gene3D" id="1.10.150.380">
    <property type="entry name" value="GatB domain, N-terminal subdomain"/>
    <property type="match status" value="1"/>
</dbReference>
<dbReference type="HAMAP" id="MF_00121">
    <property type="entry name" value="GatB"/>
    <property type="match status" value="1"/>
</dbReference>
<dbReference type="InterPro" id="IPR017959">
    <property type="entry name" value="Asn/Gln-tRNA_amidoTrfase_suB/E"/>
</dbReference>
<dbReference type="InterPro" id="IPR006075">
    <property type="entry name" value="Asn/Gln-tRNA_Trfase_suB/E_cat"/>
</dbReference>
<dbReference type="InterPro" id="IPR018027">
    <property type="entry name" value="Asn/Gln_amidotransferase"/>
</dbReference>
<dbReference type="InterPro" id="IPR003789">
    <property type="entry name" value="Asn/Gln_tRNA_amidoTrase-B-like"/>
</dbReference>
<dbReference type="InterPro" id="IPR004413">
    <property type="entry name" value="GatB"/>
</dbReference>
<dbReference type="InterPro" id="IPR042114">
    <property type="entry name" value="GatB_C_1"/>
</dbReference>
<dbReference type="InterPro" id="IPR023168">
    <property type="entry name" value="GatB_Yqey_C_2"/>
</dbReference>
<dbReference type="InterPro" id="IPR017958">
    <property type="entry name" value="Gln-tRNA_amidoTrfase_suB_CS"/>
</dbReference>
<dbReference type="InterPro" id="IPR014746">
    <property type="entry name" value="Gln_synth/guanido_kin_cat_dom"/>
</dbReference>
<dbReference type="NCBIfam" id="TIGR00133">
    <property type="entry name" value="gatB"/>
    <property type="match status" value="1"/>
</dbReference>
<dbReference type="NCBIfam" id="NF004012">
    <property type="entry name" value="PRK05477.1-2"/>
    <property type="match status" value="1"/>
</dbReference>
<dbReference type="NCBIfam" id="NF004014">
    <property type="entry name" value="PRK05477.1-4"/>
    <property type="match status" value="1"/>
</dbReference>
<dbReference type="NCBIfam" id="NF004015">
    <property type="entry name" value="PRK05477.1-5"/>
    <property type="match status" value="1"/>
</dbReference>
<dbReference type="PANTHER" id="PTHR11659">
    <property type="entry name" value="GLUTAMYL-TRNA GLN AMIDOTRANSFERASE SUBUNIT B MITOCHONDRIAL AND PROKARYOTIC PET112-RELATED"/>
    <property type="match status" value="1"/>
</dbReference>
<dbReference type="PANTHER" id="PTHR11659:SF0">
    <property type="entry name" value="GLUTAMYL-TRNA(GLN) AMIDOTRANSFERASE SUBUNIT B, MITOCHONDRIAL"/>
    <property type="match status" value="1"/>
</dbReference>
<dbReference type="Pfam" id="PF02934">
    <property type="entry name" value="GatB_N"/>
    <property type="match status" value="1"/>
</dbReference>
<dbReference type="Pfam" id="PF02637">
    <property type="entry name" value="GatB_Yqey"/>
    <property type="match status" value="1"/>
</dbReference>
<dbReference type="SMART" id="SM00845">
    <property type="entry name" value="GatB_Yqey"/>
    <property type="match status" value="1"/>
</dbReference>
<dbReference type="SUPFAM" id="SSF89095">
    <property type="entry name" value="GatB/YqeY motif"/>
    <property type="match status" value="1"/>
</dbReference>
<dbReference type="SUPFAM" id="SSF55931">
    <property type="entry name" value="Glutamine synthetase/guanido kinase"/>
    <property type="match status" value="1"/>
</dbReference>
<dbReference type="PROSITE" id="PS01234">
    <property type="entry name" value="GATB"/>
    <property type="match status" value="1"/>
</dbReference>
<comment type="function">
    <text evidence="1">Allows the formation of correctly charged Asn-tRNA(Asn) or Gln-tRNA(Gln) through the transamidation of misacylated Asp-tRNA(Asn) or Glu-tRNA(Gln) in organisms which lack either or both of asparaginyl-tRNA or glutaminyl-tRNA synthetases. The reaction takes place in the presence of glutamine and ATP through an activated phospho-Asp-tRNA(Asn) or phospho-Glu-tRNA(Gln).</text>
</comment>
<comment type="catalytic activity">
    <reaction evidence="1">
        <text>L-glutamyl-tRNA(Gln) + L-glutamine + ATP + H2O = L-glutaminyl-tRNA(Gln) + L-glutamate + ADP + phosphate + H(+)</text>
        <dbReference type="Rhea" id="RHEA:17521"/>
        <dbReference type="Rhea" id="RHEA-COMP:9681"/>
        <dbReference type="Rhea" id="RHEA-COMP:9684"/>
        <dbReference type="ChEBI" id="CHEBI:15377"/>
        <dbReference type="ChEBI" id="CHEBI:15378"/>
        <dbReference type="ChEBI" id="CHEBI:29985"/>
        <dbReference type="ChEBI" id="CHEBI:30616"/>
        <dbReference type="ChEBI" id="CHEBI:43474"/>
        <dbReference type="ChEBI" id="CHEBI:58359"/>
        <dbReference type="ChEBI" id="CHEBI:78520"/>
        <dbReference type="ChEBI" id="CHEBI:78521"/>
        <dbReference type="ChEBI" id="CHEBI:456216"/>
    </reaction>
</comment>
<comment type="catalytic activity">
    <reaction evidence="1">
        <text>L-aspartyl-tRNA(Asn) + L-glutamine + ATP + H2O = L-asparaginyl-tRNA(Asn) + L-glutamate + ADP + phosphate + 2 H(+)</text>
        <dbReference type="Rhea" id="RHEA:14513"/>
        <dbReference type="Rhea" id="RHEA-COMP:9674"/>
        <dbReference type="Rhea" id="RHEA-COMP:9677"/>
        <dbReference type="ChEBI" id="CHEBI:15377"/>
        <dbReference type="ChEBI" id="CHEBI:15378"/>
        <dbReference type="ChEBI" id="CHEBI:29985"/>
        <dbReference type="ChEBI" id="CHEBI:30616"/>
        <dbReference type="ChEBI" id="CHEBI:43474"/>
        <dbReference type="ChEBI" id="CHEBI:58359"/>
        <dbReference type="ChEBI" id="CHEBI:78515"/>
        <dbReference type="ChEBI" id="CHEBI:78516"/>
        <dbReference type="ChEBI" id="CHEBI:456216"/>
    </reaction>
</comment>
<comment type="subunit">
    <text evidence="1">Heterotrimer of A, B and C subunits.</text>
</comment>
<comment type="similarity">
    <text evidence="1">Belongs to the GatB/GatE family. GatB subfamily.</text>
</comment>
<reference key="1">
    <citation type="submission" date="2008-02" db="EMBL/GenBank/DDBJ databases">
        <title>Complete sequence of Synechococcus sp. PCC 7002.</title>
        <authorList>
            <person name="Li T."/>
            <person name="Zhao J."/>
            <person name="Zhao C."/>
            <person name="Liu Z."/>
            <person name="Zhao F."/>
            <person name="Marquardt J."/>
            <person name="Nomura C.T."/>
            <person name="Persson S."/>
            <person name="Detter J.C."/>
            <person name="Richardson P.M."/>
            <person name="Lanz C."/>
            <person name="Schuster S.C."/>
            <person name="Wang J."/>
            <person name="Li S."/>
            <person name="Huang X."/>
            <person name="Cai T."/>
            <person name="Yu Z."/>
            <person name="Luo J."/>
            <person name="Zhao J."/>
            <person name="Bryant D.A."/>
        </authorList>
    </citation>
    <scope>NUCLEOTIDE SEQUENCE [LARGE SCALE GENOMIC DNA]</scope>
    <source>
        <strain>ATCC 27264 / PCC 7002 / PR-6</strain>
    </source>
</reference>
<accession>B1XKN8</accession>
<feature type="chain" id="PRO_1000095248" description="Aspartyl/glutamyl-tRNA(Asn/Gln) amidotransferase subunit B">
    <location>
        <begin position="1"/>
        <end position="496"/>
    </location>
</feature>
<keyword id="KW-0067">ATP-binding</keyword>
<keyword id="KW-0436">Ligase</keyword>
<keyword id="KW-0547">Nucleotide-binding</keyword>
<keyword id="KW-0648">Protein biosynthesis</keyword>
<keyword id="KW-1185">Reference proteome</keyword>
<protein>
    <recommendedName>
        <fullName evidence="1">Aspartyl/glutamyl-tRNA(Asn/Gln) amidotransferase subunit B</fullName>
        <shortName evidence="1">Asp/Glu-ADT subunit B</shortName>
        <ecNumber evidence="1">6.3.5.-</ecNumber>
    </recommendedName>
</protein>
<evidence type="ECO:0000255" key="1">
    <source>
        <dbReference type="HAMAP-Rule" id="MF_00121"/>
    </source>
</evidence>